<name>LPXC_MANSM</name>
<keyword id="KW-0378">Hydrolase</keyword>
<keyword id="KW-0441">Lipid A biosynthesis</keyword>
<keyword id="KW-0444">Lipid biosynthesis</keyword>
<keyword id="KW-0443">Lipid metabolism</keyword>
<keyword id="KW-0479">Metal-binding</keyword>
<keyword id="KW-0862">Zinc</keyword>
<feature type="chain" id="PRO_0000253676" description="UDP-3-O-acyl-N-acetylglucosamine deacetylase">
    <location>
        <begin position="1"/>
        <end position="305"/>
    </location>
</feature>
<feature type="active site" description="Proton donor" evidence="1">
    <location>
        <position position="265"/>
    </location>
</feature>
<feature type="binding site" evidence="1">
    <location>
        <position position="79"/>
    </location>
    <ligand>
        <name>Zn(2+)</name>
        <dbReference type="ChEBI" id="CHEBI:29105"/>
    </ligand>
</feature>
<feature type="binding site" evidence="1">
    <location>
        <position position="238"/>
    </location>
    <ligand>
        <name>Zn(2+)</name>
        <dbReference type="ChEBI" id="CHEBI:29105"/>
    </ligand>
</feature>
<feature type="binding site" evidence="1">
    <location>
        <position position="242"/>
    </location>
    <ligand>
        <name>Zn(2+)</name>
        <dbReference type="ChEBI" id="CHEBI:29105"/>
    </ligand>
</feature>
<proteinExistence type="inferred from homology"/>
<sequence length="305" mass="33956">MIKQRTLKQSIKVTGVGLHSGNKVTLKLRPAPINTGIVYCRTDLTPPVYFPADATAVRDTMLCTALVNDQGVRISTVEHLNSALAGLGLDNVIIEVDAPEVPIMDGSASPFVYLLLDAGIEEQDAAKKFIRVKQKIRVEDGDKWAEISPYNGFRLNFTIDFNHPAISKNLSNYTLEFSAQKFVQQISRARTFAFMKDIEYLQSQGLALGGSLDNAIVLDNYRVLNEDGLRFKDELVRHKMLDAIGDLFMAGYNILGDFKAYKSGHGLNNKLLRALLANQEAWEFVTFEDKEKVPQGYAIPSQVLI</sequence>
<protein>
    <recommendedName>
        <fullName evidence="1">UDP-3-O-acyl-N-acetylglucosamine deacetylase</fullName>
        <shortName evidence="1">UDP-3-O-acyl-GlcNAc deacetylase</shortName>
        <ecNumber evidence="1">3.5.1.108</ecNumber>
    </recommendedName>
    <alternativeName>
        <fullName evidence="1">UDP-3-O-[R-3-hydroxymyristoyl]-N-acetylglucosamine deacetylase</fullName>
    </alternativeName>
</protein>
<dbReference type="EC" id="3.5.1.108" evidence="1"/>
<dbReference type="EMBL" id="AE016827">
    <property type="protein sequence ID" value="AAU38266.1"/>
    <property type="molecule type" value="Genomic_DNA"/>
</dbReference>
<dbReference type="RefSeq" id="WP_011200827.1">
    <property type="nucleotide sequence ID" value="NC_006300.1"/>
</dbReference>
<dbReference type="SMR" id="Q65RZ4"/>
<dbReference type="STRING" id="221988.MS1659"/>
<dbReference type="KEGG" id="msu:MS1659"/>
<dbReference type="eggNOG" id="COG0774">
    <property type="taxonomic scope" value="Bacteria"/>
</dbReference>
<dbReference type="HOGENOM" id="CLU_046528_1_0_6"/>
<dbReference type="OrthoDB" id="9802746at2"/>
<dbReference type="UniPathway" id="UPA00359">
    <property type="reaction ID" value="UER00478"/>
</dbReference>
<dbReference type="Proteomes" id="UP000000607">
    <property type="component" value="Chromosome"/>
</dbReference>
<dbReference type="GO" id="GO:0016020">
    <property type="term" value="C:membrane"/>
    <property type="evidence" value="ECO:0007669"/>
    <property type="project" value="GOC"/>
</dbReference>
<dbReference type="GO" id="GO:0046872">
    <property type="term" value="F:metal ion binding"/>
    <property type="evidence" value="ECO:0007669"/>
    <property type="project" value="UniProtKB-KW"/>
</dbReference>
<dbReference type="GO" id="GO:0103117">
    <property type="term" value="F:UDP-3-O-acyl-N-acetylglucosamine deacetylase activity"/>
    <property type="evidence" value="ECO:0007669"/>
    <property type="project" value="UniProtKB-UniRule"/>
</dbReference>
<dbReference type="GO" id="GO:0009245">
    <property type="term" value="P:lipid A biosynthetic process"/>
    <property type="evidence" value="ECO:0007669"/>
    <property type="project" value="UniProtKB-UniRule"/>
</dbReference>
<dbReference type="FunFam" id="3.30.1700.10:FF:000001">
    <property type="entry name" value="UDP-3-O-acyl-N-acetylglucosamine deacetylase"/>
    <property type="match status" value="1"/>
</dbReference>
<dbReference type="Gene3D" id="3.30.230.20">
    <property type="entry name" value="lpxc deacetylase, domain 1"/>
    <property type="match status" value="1"/>
</dbReference>
<dbReference type="Gene3D" id="3.30.1700.10">
    <property type="entry name" value="lpxc deacetylase, domain 2"/>
    <property type="match status" value="1"/>
</dbReference>
<dbReference type="HAMAP" id="MF_00388">
    <property type="entry name" value="LpxC"/>
    <property type="match status" value="1"/>
</dbReference>
<dbReference type="InterPro" id="IPR020568">
    <property type="entry name" value="Ribosomal_Su5_D2-typ_SF"/>
</dbReference>
<dbReference type="InterPro" id="IPR004463">
    <property type="entry name" value="UDP-acyl_GlcNac_deAcase"/>
</dbReference>
<dbReference type="InterPro" id="IPR011334">
    <property type="entry name" value="UDP-acyl_GlcNac_deAcase_C"/>
</dbReference>
<dbReference type="InterPro" id="IPR015870">
    <property type="entry name" value="UDP-acyl_N-AcGlcN_deAcase_N"/>
</dbReference>
<dbReference type="NCBIfam" id="TIGR00325">
    <property type="entry name" value="lpxC"/>
    <property type="match status" value="1"/>
</dbReference>
<dbReference type="PANTHER" id="PTHR33694">
    <property type="entry name" value="UDP-3-O-ACYL-N-ACETYLGLUCOSAMINE DEACETYLASE 1, MITOCHONDRIAL-RELATED"/>
    <property type="match status" value="1"/>
</dbReference>
<dbReference type="PANTHER" id="PTHR33694:SF1">
    <property type="entry name" value="UDP-3-O-ACYL-N-ACETYLGLUCOSAMINE DEACETYLASE 1, MITOCHONDRIAL-RELATED"/>
    <property type="match status" value="1"/>
</dbReference>
<dbReference type="Pfam" id="PF03331">
    <property type="entry name" value="LpxC"/>
    <property type="match status" value="1"/>
</dbReference>
<dbReference type="SUPFAM" id="SSF54211">
    <property type="entry name" value="Ribosomal protein S5 domain 2-like"/>
    <property type="match status" value="2"/>
</dbReference>
<comment type="function">
    <text evidence="1">Catalyzes the hydrolysis of UDP-3-O-myristoyl-N-acetylglucosamine to form UDP-3-O-myristoylglucosamine and acetate, the committed step in lipid A biosynthesis.</text>
</comment>
<comment type="catalytic activity">
    <reaction evidence="1">
        <text>a UDP-3-O-[(3R)-3-hydroxyacyl]-N-acetyl-alpha-D-glucosamine + H2O = a UDP-3-O-[(3R)-3-hydroxyacyl]-alpha-D-glucosamine + acetate</text>
        <dbReference type="Rhea" id="RHEA:67816"/>
        <dbReference type="ChEBI" id="CHEBI:15377"/>
        <dbReference type="ChEBI" id="CHEBI:30089"/>
        <dbReference type="ChEBI" id="CHEBI:137740"/>
        <dbReference type="ChEBI" id="CHEBI:173225"/>
        <dbReference type="EC" id="3.5.1.108"/>
    </reaction>
</comment>
<comment type="cofactor">
    <cofactor evidence="1">
        <name>Zn(2+)</name>
        <dbReference type="ChEBI" id="CHEBI:29105"/>
    </cofactor>
</comment>
<comment type="pathway">
    <text evidence="1">Glycolipid biosynthesis; lipid IV(A) biosynthesis; lipid IV(A) from (3R)-3-hydroxytetradecanoyl-[acyl-carrier-protein] and UDP-N-acetyl-alpha-D-glucosamine: step 2/6.</text>
</comment>
<comment type="similarity">
    <text evidence="1">Belongs to the LpxC family.</text>
</comment>
<organism>
    <name type="scientific">Mannheimia succiniciproducens (strain KCTC 0769BP / MBEL55E)</name>
    <dbReference type="NCBI Taxonomy" id="221988"/>
    <lineage>
        <taxon>Bacteria</taxon>
        <taxon>Pseudomonadati</taxon>
        <taxon>Pseudomonadota</taxon>
        <taxon>Gammaproteobacteria</taxon>
        <taxon>Pasteurellales</taxon>
        <taxon>Pasteurellaceae</taxon>
        <taxon>Basfia</taxon>
    </lineage>
</organism>
<evidence type="ECO:0000255" key="1">
    <source>
        <dbReference type="HAMAP-Rule" id="MF_00388"/>
    </source>
</evidence>
<gene>
    <name evidence="1" type="primary">lpxC</name>
    <name type="ordered locus">MS1659</name>
</gene>
<reference key="1">
    <citation type="journal article" date="2004" name="Nat. Biotechnol.">
        <title>The genome sequence of the capnophilic rumen bacterium Mannheimia succiniciproducens.</title>
        <authorList>
            <person name="Hong S.H."/>
            <person name="Kim J.S."/>
            <person name="Lee S.Y."/>
            <person name="In Y.H."/>
            <person name="Choi S.S."/>
            <person name="Rih J.-K."/>
            <person name="Kim C.H."/>
            <person name="Jeong H."/>
            <person name="Hur C.G."/>
            <person name="Kim J.J."/>
        </authorList>
    </citation>
    <scope>NUCLEOTIDE SEQUENCE [LARGE SCALE GENOMIC DNA]</scope>
    <source>
        <strain>KCTC 0769BP / MBEL55E</strain>
    </source>
</reference>
<accession>Q65RZ4</accession>